<evidence type="ECO:0000255" key="1"/>
<evidence type="ECO:0000255" key="2">
    <source>
        <dbReference type="PROSITE-ProRule" id="PRU00498"/>
    </source>
</evidence>
<evidence type="ECO:0000255" key="3">
    <source>
        <dbReference type="PROSITE-ProRule" id="PRU01118"/>
    </source>
</evidence>
<evidence type="ECO:0000305" key="4"/>
<evidence type="ECO:0000305" key="5">
    <source>
    </source>
</evidence>
<comment type="function">
    <text evidence="5">Might have a role in sequestration of chitin oligosaccharides (breakdown products of fungal cell walls that are released during invasion and act as triggers of host immunity) to dampen host defense.</text>
</comment>
<comment type="subcellular location">
    <subcellularLocation>
        <location evidence="4">Secreted</location>
    </subcellularLocation>
</comment>
<comment type="domain">
    <text evidence="5">The LysM domain binds chitin and potentially related carbohydrates, and might be involved in damping host defense.</text>
</comment>
<comment type="sequence caution" evidence="4">
    <conflict type="erroneous gene model prediction">
        <sequence resource="EMBL-CDS" id="EFE31902"/>
    </conflict>
</comment>
<comment type="sequence caution" evidence="4">
    <conflict type="erroneous gene model prediction">
        <sequence resource="EMBL-CDS" id="EFE31903"/>
    </conflict>
</comment>
<name>LYSM6_ARTBC</name>
<accession>D4AY86</accession>
<accession>D4AY87</accession>
<keyword id="KW-0147">Chitin-binding</keyword>
<keyword id="KW-0325">Glycoprotein</keyword>
<keyword id="KW-1185">Reference proteome</keyword>
<keyword id="KW-0964">Secreted</keyword>
<keyword id="KW-0732">Signal</keyword>
<keyword id="KW-0843">Virulence</keyword>
<feature type="signal peptide" evidence="1">
    <location>
        <begin position="1"/>
        <end position="18"/>
    </location>
</feature>
<feature type="chain" id="PRO_5003054097" description="LysM domain-containing protein ARB_01155/01156">
    <location>
        <begin position="19"/>
        <end position="573"/>
    </location>
</feature>
<feature type="domain" description="LysM" evidence="3">
    <location>
        <begin position="373"/>
        <end position="419"/>
    </location>
</feature>
<feature type="region of interest" description="LysM domain" evidence="4">
    <location>
        <begin position="375"/>
        <end position="405"/>
    </location>
</feature>
<feature type="glycosylation site" description="N-linked (GlcNAc...) asparagine" evidence="2">
    <location>
        <position position="46"/>
    </location>
</feature>
<feature type="glycosylation site" description="N-linked (GlcNAc...) asparagine" evidence="2">
    <location>
        <position position="71"/>
    </location>
</feature>
<feature type="glycosylation site" description="N-linked (GlcNAc...) asparagine" evidence="2">
    <location>
        <position position="283"/>
    </location>
</feature>
<proteinExistence type="inferred from homology"/>
<reference key="1">
    <citation type="journal article" date="2011" name="Genome Biol.">
        <title>Comparative and functional genomics provide insights into the pathogenicity of dermatophytic fungi.</title>
        <authorList>
            <person name="Burmester A."/>
            <person name="Shelest E."/>
            <person name="Gloeckner G."/>
            <person name="Heddergott C."/>
            <person name="Schindler S."/>
            <person name="Staib P."/>
            <person name="Heidel A."/>
            <person name="Felder M."/>
            <person name="Petzold A."/>
            <person name="Szafranski K."/>
            <person name="Feuermann M."/>
            <person name="Pedruzzi I."/>
            <person name="Priebe S."/>
            <person name="Groth M."/>
            <person name="Winkler R."/>
            <person name="Li W."/>
            <person name="Kniemeyer O."/>
            <person name="Schroeckh V."/>
            <person name="Hertweck C."/>
            <person name="Hube B."/>
            <person name="White T.C."/>
            <person name="Platzer M."/>
            <person name="Guthke R."/>
            <person name="Heitman J."/>
            <person name="Woestemeyer J."/>
            <person name="Zipfel P.F."/>
            <person name="Monod M."/>
            <person name="Brakhage A.A."/>
        </authorList>
    </citation>
    <scope>NUCLEOTIDE SEQUENCE [LARGE SCALE GENOMIC DNA]</scope>
    <source>
        <strain>ATCC MYA-4681 / CBS 112371</strain>
    </source>
</reference>
<reference key="2">
    <citation type="journal article" date="2009" name="Trends Microbiol.">
        <title>Fungal LysM effectors: extinguishers of host immunity?</title>
        <authorList>
            <person name="de Jonge R."/>
            <person name="Thomma B.P."/>
        </authorList>
    </citation>
    <scope>DOMAIN</scope>
    <scope>FUNCTION PREDICTION</scope>
</reference>
<sequence>MIPRNLISGLFLLPFVVAELNIYGYLDLKTLADGFHTTTACIAALNQTVDCDARTAVAAAVADTYYWTLDNVTTLCTSQCQQSLTSWTSAVDAACGNRPIVEDGIVKLASSTPLTYKEGFDLVCLKSGDSWCMIESQEWEGSDILKYPTDYCSTGDPEYDGPECFEKGFDQLAIEAGDERMTSLYEKDLLCSDCFLKVFRQRLLSPFLLKGGYTSYLVEQFQDMQSYCSTSMPYATSTSEVFMGTATRTMPTGSPPPTTTCGGPTIQPTDPPLSCEAITDKYNVTTGDSHSDLHGEFSLASKPRFLKANAIDRQHEPIEKLDHAICYAGTSEPPGGSYESQPPVHQPTGASEYYTTAIPPAPTSTGTTPSCGRYYEVVAGDQCNTIALHFGITVDAFLSLNTQIDERCSNLWIAYAYCVAPVDIVDQPMTIVDQDIATQGNVLPATELPSPRMGRVVLNIMIGSVVTQLLENAALSMDIAGVRRTSAQQGIVIRVPVIQTLAKRVLTVRADQALQETKHVPALNLAHVATWRDIVEMEPTTAHPGDAILERAKGPRIHSIALYVTVLYLDLWI</sequence>
<protein>
    <recommendedName>
        <fullName evidence="4">LysM domain-containing protein ARB_01155/01156</fullName>
    </recommendedName>
</protein>
<organism>
    <name type="scientific">Arthroderma benhamiae (strain ATCC MYA-4681 / CBS 112371)</name>
    <name type="common">Trichophyton mentagrophytes</name>
    <dbReference type="NCBI Taxonomy" id="663331"/>
    <lineage>
        <taxon>Eukaryota</taxon>
        <taxon>Fungi</taxon>
        <taxon>Dikarya</taxon>
        <taxon>Ascomycota</taxon>
        <taxon>Pezizomycotina</taxon>
        <taxon>Eurotiomycetes</taxon>
        <taxon>Eurotiomycetidae</taxon>
        <taxon>Onygenales</taxon>
        <taxon>Arthrodermataceae</taxon>
        <taxon>Trichophyton</taxon>
    </lineage>
</organism>
<gene>
    <name type="ORF">ARB_01155/01156</name>
</gene>
<dbReference type="EMBL" id="ABSU01000018">
    <property type="protein sequence ID" value="EFE31902.1"/>
    <property type="status" value="ALT_SEQ"/>
    <property type="molecule type" value="Genomic_DNA"/>
</dbReference>
<dbReference type="EMBL" id="ABSU01000018">
    <property type="protein sequence ID" value="EFE31903.1"/>
    <property type="status" value="ALT_SEQ"/>
    <property type="molecule type" value="Genomic_DNA"/>
</dbReference>
<dbReference type="RefSeq" id="XP_003012542.1">
    <property type="nucleotide sequence ID" value="XM_003012496.1"/>
</dbReference>
<dbReference type="RefSeq" id="XP_003012543.1">
    <property type="nucleotide sequence ID" value="XM_003012497.1"/>
</dbReference>
<dbReference type="STRING" id="663331.D4AY86"/>
<dbReference type="KEGG" id="abe:ARB_01155"/>
<dbReference type="KEGG" id="abe:ARB_01156"/>
<dbReference type="eggNOG" id="ENOG502SNDA">
    <property type="taxonomic scope" value="Eukaryota"/>
</dbReference>
<dbReference type="HOGENOM" id="CLU_973832_0_0_1"/>
<dbReference type="OrthoDB" id="4171311at2759"/>
<dbReference type="Proteomes" id="UP000008866">
    <property type="component" value="Unassembled WGS sequence"/>
</dbReference>
<dbReference type="GO" id="GO:0005576">
    <property type="term" value="C:extracellular region"/>
    <property type="evidence" value="ECO:0007669"/>
    <property type="project" value="UniProtKB-SubCell"/>
</dbReference>
<dbReference type="GO" id="GO:0008061">
    <property type="term" value="F:chitin binding"/>
    <property type="evidence" value="ECO:0007669"/>
    <property type="project" value="UniProtKB-KW"/>
</dbReference>
<dbReference type="CDD" id="cd00118">
    <property type="entry name" value="LysM"/>
    <property type="match status" value="1"/>
</dbReference>
<dbReference type="Gene3D" id="3.10.350.10">
    <property type="entry name" value="LysM domain"/>
    <property type="match status" value="1"/>
</dbReference>
<dbReference type="InterPro" id="IPR052210">
    <property type="entry name" value="LysM1-like"/>
</dbReference>
<dbReference type="InterPro" id="IPR018392">
    <property type="entry name" value="LysM_dom"/>
</dbReference>
<dbReference type="InterPro" id="IPR036779">
    <property type="entry name" value="LysM_dom_sf"/>
</dbReference>
<dbReference type="PANTHER" id="PTHR34997">
    <property type="entry name" value="AM15"/>
    <property type="match status" value="1"/>
</dbReference>
<dbReference type="PANTHER" id="PTHR34997:SF1">
    <property type="entry name" value="PEPTIDOGLYCAN-BINDING LYSIN DOMAIN"/>
    <property type="match status" value="1"/>
</dbReference>
<dbReference type="Pfam" id="PF01476">
    <property type="entry name" value="LysM"/>
    <property type="match status" value="1"/>
</dbReference>
<dbReference type="SUPFAM" id="SSF54106">
    <property type="entry name" value="LysM domain"/>
    <property type="match status" value="1"/>
</dbReference>
<dbReference type="PROSITE" id="PS51782">
    <property type="entry name" value="LYSM"/>
    <property type="match status" value="1"/>
</dbReference>